<comment type="catalytic activity">
    <reaction evidence="1">
        <text>acetaldehyde + NAD(+) + CoA = acetyl-CoA + NADH + H(+)</text>
        <dbReference type="Rhea" id="RHEA:23288"/>
        <dbReference type="ChEBI" id="CHEBI:15343"/>
        <dbReference type="ChEBI" id="CHEBI:15378"/>
        <dbReference type="ChEBI" id="CHEBI:57287"/>
        <dbReference type="ChEBI" id="CHEBI:57288"/>
        <dbReference type="ChEBI" id="CHEBI:57540"/>
        <dbReference type="ChEBI" id="CHEBI:57945"/>
        <dbReference type="EC" id="1.2.1.10"/>
    </reaction>
</comment>
<comment type="similarity">
    <text evidence="1">Belongs to the acetaldehyde dehydrogenase family.</text>
</comment>
<evidence type="ECO:0000255" key="1">
    <source>
        <dbReference type="HAMAP-Rule" id="MF_01657"/>
    </source>
</evidence>
<proteinExistence type="inferred from homology"/>
<accession>A2SI34</accession>
<feature type="chain" id="PRO_0000387666" description="Acetaldehyde dehydrogenase 1">
    <location>
        <begin position="1"/>
        <end position="303"/>
    </location>
</feature>
<feature type="active site" description="Acyl-thioester intermediate" evidence="1">
    <location>
        <position position="130"/>
    </location>
</feature>
<feature type="binding site" evidence="1">
    <location>
        <begin position="161"/>
        <end position="169"/>
    </location>
    <ligand>
        <name>NAD(+)</name>
        <dbReference type="ChEBI" id="CHEBI:57540"/>
    </ligand>
</feature>
<feature type="binding site" evidence="1">
    <location>
        <position position="272"/>
    </location>
    <ligand>
        <name>NAD(+)</name>
        <dbReference type="ChEBI" id="CHEBI:57540"/>
    </ligand>
</feature>
<name>ACDH1_METPP</name>
<organism>
    <name type="scientific">Methylibium petroleiphilum (strain ATCC BAA-1232 / LMG 22953 / PM1)</name>
    <dbReference type="NCBI Taxonomy" id="420662"/>
    <lineage>
        <taxon>Bacteria</taxon>
        <taxon>Pseudomonadati</taxon>
        <taxon>Pseudomonadota</taxon>
        <taxon>Betaproteobacteria</taxon>
        <taxon>Burkholderiales</taxon>
        <taxon>Sphaerotilaceae</taxon>
        <taxon>Methylibium</taxon>
    </lineage>
</organism>
<dbReference type="EC" id="1.2.1.10" evidence="1"/>
<dbReference type="EMBL" id="CP000555">
    <property type="protein sequence ID" value="ABM95223.1"/>
    <property type="molecule type" value="Genomic_DNA"/>
</dbReference>
<dbReference type="RefSeq" id="WP_011829860.1">
    <property type="nucleotide sequence ID" value="NC_008825.1"/>
</dbReference>
<dbReference type="SMR" id="A2SI34"/>
<dbReference type="STRING" id="420662.Mpe_A2267"/>
<dbReference type="KEGG" id="mpt:Mpe_A2267"/>
<dbReference type="eggNOG" id="COG4569">
    <property type="taxonomic scope" value="Bacteria"/>
</dbReference>
<dbReference type="HOGENOM" id="CLU_062208_0_0_4"/>
<dbReference type="Proteomes" id="UP000000366">
    <property type="component" value="Chromosome"/>
</dbReference>
<dbReference type="GO" id="GO:0008774">
    <property type="term" value="F:acetaldehyde dehydrogenase (acetylating) activity"/>
    <property type="evidence" value="ECO:0007669"/>
    <property type="project" value="UniProtKB-UniRule"/>
</dbReference>
<dbReference type="GO" id="GO:0051287">
    <property type="term" value="F:NAD binding"/>
    <property type="evidence" value="ECO:0007669"/>
    <property type="project" value="UniProtKB-UniRule"/>
</dbReference>
<dbReference type="GO" id="GO:0009056">
    <property type="term" value="P:catabolic process"/>
    <property type="evidence" value="ECO:0007669"/>
    <property type="project" value="UniProtKB-KW"/>
</dbReference>
<dbReference type="CDD" id="cd23933">
    <property type="entry name" value="ALDH_C"/>
    <property type="match status" value="1"/>
</dbReference>
<dbReference type="Gene3D" id="3.30.360.10">
    <property type="entry name" value="Dihydrodipicolinate Reductase, domain 2"/>
    <property type="match status" value="1"/>
</dbReference>
<dbReference type="Gene3D" id="3.40.50.720">
    <property type="entry name" value="NAD(P)-binding Rossmann-like Domain"/>
    <property type="match status" value="1"/>
</dbReference>
<dbReference type="HAMAP" id="MF_01657">
    <property type="entry name" value="Ac_ald_DH_ac"/>
    <property type="match status" value="1"/>
</dbReference>
<dbReference type="InterPro" id="IPR003361">
    <property type="entry name" value="Acetaldehyde_dehydrogenase"/>
</dbReference>
<dbReference type="InterPro" id="IPR015426">
    <property type="entry name" value="Acetylaldehyde_DH_C"/>
</dbReference>
<dbReference type="InterPro" id="IPR036291">
    <property type="entry name" value="NAD(P)-bd_dom_sf"/>
</dbReference>
<dbReference type="InterPro" id="IPR000534">
    <property type="entry name" value="Semialdehyde_DH_NAD-bd"/>
</dbReference>
<dbReference type="NCBIfam" id="TIGR03215">
    <property type="entry name" value="ac_ald_DH_ac"/>
    <property type="match status" value="1"/>
</dbReference>
<dbReference type="NCBIfam" id="NF006157">
    <property type="entry name" value="PRK08300.1"/>
    <property type="match status" value="1"/>
</dbReference>
<dbReference type="Pfam" id="PF09290">
    <property type="entry name" value="AcetDehyd-dimer"/>
    <property type="match status" value="1"/>
</dbReference>
<dbReference type="PIRSF" id="PIRSF015689">
    <property type="entry name" value="Actaldh_dh_actl"/>
    <property type="match status" value="1"/>
</dbReference>
<dbReference type="SMART" id="SM00859">
    <property type="entry name" value="Semialdhyde_dh"/>
    <property type="match status" value="1"/>
</dbReference>
<dbReference type="SUPFAM" id="SSF55347">
    <property type="entry name" value="Glyceraldehyde-3-phosphate dehydrogenase-like, C-terminal domain"/>
    <property type="match status" value="1"/>
</dbReference>
<dbReference type="SUPFAM" id="SSF51735">
    <property type="entry name" value="NAD(P)-binding Rossmann-fold domains"/>
    <property type="match status" value="1"/>
</dbReference>
<sequence length="303" mass="32208">MKKIKCALIGPGNIGTDLLAKLQRSPVLEPVWMVGIDPGSDGLKRARDAGLKTTAEGVDGLLPHVKADGVQIAFDATSAYVHAENSRKLNALGVMMIDLTPAAIGPFCVPPVNLKQHLGRREMNVNMVTCGGQATIPMVAAVSQVQAVAYGEIVATVSSRSVGPGTRKNIDEFTRTTAGAVEKVGGAKKGKAIIIINPAEPPLIMRDTVHCLTVDEPDRDRITASIHQMIREVQKYVPGYKLVNGPVFDGKRVSVFMEVEGLGDYLPKYAGNLDIMTAAAARTAEMFAEELIAGTLKLEAVPA</sequence>
<reference key="1">
    <citation type="journal article" date="2007" name="J. Bacteriol.">
        <title>Whole-genome analysis of the methyl tert-butyl ether-degrading beta-proteobacterium Methylibium petroleiphilum PM1.</title>
        <authorList>
            <person name="Kane S.R."/>
            <person name="Chakicherla A.Y."/>
            <person name="Chain P.S.G."/>
            <person name="Schmidt R."/>
            <person name="Shin M.W."/>
            <person name="Legler T.C."/>
            <person name="Scow K.M."/>
            <person name="Larimer F.W."/>
            <person name="Lucas S.M."/>
            <person name="Richardson P.M."/>
            <person name="Hristova K.R."/>
        </authorList>
    </citation>
    <scope>NUCLEOTIDE SEQUENCE [LARGE SCALE GENOMIC DNA]</scope>
    <source>
        <strain>ATCC BAA-1232 / LMG 22953 / PM1</strain>
    </source>
</reference>
<keyword id="KW-0058">Aromatic hydrocarbons catabolism</keyword>
<keyword id="KW-0520">NAD</keyword>
<keyword id="KW-0560">Oxidoreductase</keyword>
<keyword id="KW-1185">Reference proteome</keyword>
<gene>
    <name type="ordered locus">Mpe_A2267</name>
</gene>
<protein>
    <recommendedName>
        <fullName evidence="1">Acetaldehyde dehydrogenase 1</fullName>
        <ecNumber evidence="1">1.2.1.10</ecNumber>
    </recommendedName>
    <alternativeName>
        <fullName evidence="1">Acetaldehyde dehydrogenase [acetylating] 1</fullName>
    </alternativeName>
</protein>